<protein>
    <recommendedName>
        <fullName>Nischarin</fullName>
    </recommendedName>
    <alternativeName>
        <fullName>Imidazoline receptor 1</fullName>
        <shortName>I-1</shortName>
        <shortName>IR1</shortName>
    </alternativeName>
    <alternativeName>
        <fullName>Imidazoline receptor I-1-like protein</fullName>
    </alternativeName>
    <alternativeName>
        <fullName>Imidazoline-1 receptor</fullName>
        <shortName>I1R</shortName>
    </alternativeName>
</protein>
<dbReference type="EMBL" id="AF315344">
    <property type="protein sequence ID" value="AAG42100.1"/>
    <property type="molecule type" value="mRNA"/>
</dbReference>
<dbReference type="EMBL" id="AK122412">
    <property type="protein sequence ID" value="BAC65694.1"/>
    <property type="status" value="ALT_INIT"/>
    <property type="molecule type" value="mRNA"/>
</dbReference>
<dbReference type="EMBL" id="AK036043">
    <property type="protein sequence ID" value="BAC29286.1"/>
    <property type="molecule type" value="mRNA"/>
</dbReference>
<dbReference type="EMBL" id="AK080441">
    <property type="protein sequence ID" value="BAC37917.1"/>
    <property type="molecule type" value="mRNA"/>
</dbReference>
<dbReference type="EMBL" id="AK086880">
    <property type="protein sequence ID" value="BAC39757.1"/>
    <property type="molecule type" value="mRNA"/>
</dbReference>
<dbReference type="EMBL" id="AC108416">
    <property type="status" value="NOT_ANNOTATED_CDS"/>
    <property type="molecule type" value="Genomic_DNA"/>
</dbReference>
<dbReference type="EMBL" id="AC154446">
    <property type="status" value="NOT_ANNOTATED_CDS"/>
    <property type="molecule type" value="Genomic_DNA"/>
</dbReference>
<dbReference type="EMBL" id="BC003270">
    <property type="protein sequence ID" value="AAH03270.1"/>
    <property type="status" value="ALT_INIT"/>
    <property type="molecule type" value="mRNA"/>
</dbReference>
<dbReference type="EMBL" id="BC108364">
    <property type="protein sequence ID" value="AAI08365.1"/>
    <property type="status" value="ALT_FRAME"/>
    <property type="molecule type" value="mRNA"/>
</dbReference>
<dbReference type="EMBL" id="AY032852">
    <property type="protein sequence ID" value="AAK52087.1"/>
    <property type="status" value="ALT_INIT"/>
    <property type="molecule type" value="mRNA"/>
</dbReference>
<dbReference type="EMBL" id="AF144133">
    <property type="protein sequence ID" value="AAD31521.1"/>
    <property type="molecule type" value="mRNA"/>
</dbReference>
<dbReference type="CCDS" id="CCDS36853.1">
    <molecule id="Q80TM9-1"/>
</dbReference>
<dbReference type="CCDS" id="CCDS84107.1">
    <molecule id="Q80TM9-6"/>
</dbReference>
<dbReference type="RefSeq" id="NP_001334512.1">
    <molecule id="Q80TM9-6"/>
    <property type="nucleotide sequence ID" value="NM_001347583.1"/>
</dbReference>
<dbReference type="RefSeq" id="NP_073147.2">
    <molecule id="Q80TM9-1"/>
    <property type="nucleotide sequence ID" value="NM_022656.2"/>
</dbReference>
<dbReference type="SMR" id="Q80TM9"/>
<dbReference type="BioGRID" id="211089">
    <property type="interactions" value="5"/>
</dbReference>
<dbReference type="CORUM" id="Q80TM9"/>
<dbReference type="FunCoup" id="Q80TM9">
    <property type="interactions" value="2994"/>
</dbReference>
<dbReference type="IntAct" id="Q80TM9">
    <property type="interactions" value="3"/>
</dbReference>
<dbReference type="STRING" id="10090.ENSMUSP00000022469"/>
<dbReference type="GlyGen" id="Q80TM9">
    <property type="glycosylation" value="1 site"/>
</dbReference>
<dbReference type="iPTMnet" id="Q80TM9"/>
<dbReference type="PhosphoSitePlus" id="Q80TM9"/>
<dbReference type="jPOST" id="Q80TM9"/>
<dbReference type="PaxDb" id="10090-ENSMUSP00000022469"/>
<dbReference type="PeptideAtlas" id="Q80TM9"/>
<dbReference type="ProteomicsDB" id="293557">
    <molecule id="Q80TM9-1"/>
</dbReference>
<dbReference type="ProteomicsDB" id="293558">
    <molecule id="Q80TM9-2"/>
</dbReference>
<dbReference type="ProteomicsDB" id="293559">
    <molecule id="Q80TM9-3"/>
</dbReference>
<dbReference type="ProteomicsDB" id="293560">
    <molecule id="Q80TM9-4"/>
</dbReference>
<dbReference type="ProteomicsDB" id="293561">
    <molecule id="Q80TM9-5"/>
</dbReference>
<dbReference type="ProteomicsDB" id="293562">
    <molecule id="Q80TM9-6"/>
</dbReference>
<dbReference type="ProteomicsDB" id="293563">
    <molecule id="Q80TM9-7"/>
</dbReference>
<dbReference type="Pumba" id="Q80TM9"/>
<dbReference type="Antibodypedia" id="14512">
    <property type="antibodies" value="106 antibodies from 24 providers"/>
</dbReference>
<dbReference type="DNASU" id="64652"/>
<dbReference type="Ensembl" id="ENSMUST00000022469.13">
    <molecule id="Q80TM9-1"/>
    <property type="protein sequence ID" value="ENSMUSP00000022469.7"/>
    <property type="gene ID" value="ENSMUSG00000021910.16"/>
</dbReference>
<dbReference type="Ensembl" id="ENSMUST00000164989.8">
    <molecule id="Q80TM9-5"/>
    <property type="protein sequence ID" value="ENSMUSP00000126982.2"/>
    <property type="gene ID" value="ENSMUSG00000021910.16"/>
</dbReference>
<dbReference type="Ensembl" id="ENSMUST00000165981.8">
    <molecule id="Q80TM9-4"/>
    <property type="protein sequence ID" value="ENSMUSP00000130210.2"/>
    <property type="gene ID" value="ENSMUSG00000021910.16"/>
</dbReference>
<dbReference type="Ensembl" id="ENSMUST00000168206.8">
    <molecule id="Q80TM9-3"/>
    <property type="protein sequence ID" value="ENSMUSP00000132842.2"/>
    <property type="gene ID" value="ENSMUSG00000021910.16"/>
</dbReference>
<dbReference type="Ensembl" id="ENSMUST00000171735.2">
    <molecule id="Q80TM9-7"/>
    <property type="protein sequence ID" value="ENSMUSP00000127132.2"/>
    <property type="gene ID" value="ENSMUSG00000021910.16"/>
</dbReference>
<dbReference type="Ensembl" id="ENSMUST00000172142.8">
    <molecule id="Q80TM9-6"/>
    <property type="protein sequence ID" value="ENSMUSP00000132413.2"/>
    <property type="gene ID" value="ENSMUSG00000021910.16"/>
</dbReference>
<dbReference type="GeneID" id="64652"/>
<dbReference type="KEGG" id="mmu:64652"/>
<dbReference type="UCSC" id="uc007swy.1">
    <molecule id="Q80TM9-1"/>
    <property type="organism name" value="mouse"/>
</dbReference>
<dbReference type="UCSC" id="uc007sxa.1">
    <molecule id="Q80TM9-6"/>
    <property type="organism name" value="mouse"/>
</dbReference>
<dbReference type="UCSC" id="uc007sxb.1">
    <molecule id="Q80TM9-4"/>
    <property type="organism name" value="mouse"/>
</dbReference>
<dbReference type="UCSC" id="uc007sxc.1">
    <molecule id="Q80TM9-7"/>
    <property type="organism name" value="mouse"/>
</dbReference>
<dbReference type="AGR" id="MGI:1928323"/>
<dbReference type="CTD" id="11188"/>
<dbReference type="MGI" id="MGI:1928323">
    <property type="gene designation" value="Nisch"/>
</dbReference>
<dbReference type="VEuPathDB" id="HostDB:ENSMUSG00000021910"/>
<dbReference type="eggNOG" id="KOG1259">
    <property type="taxonomic scope" value="Eukaryota"/>
</dbReference>
<dbReference type="GeneTree" id="ENSGT00940000156494"/>
<dbReference type="HOGENOM" id="CLU_252294_0_0_1"/>
<dbReference type="InParanoid" id="Q80TM9"/>
<dbReference type="OMA" id="WSKNDLC"/>
<dbReference type="OrthoDB" id="430293at2759"/>
<dbReference type="PhylomeDB" id="Q80TM9"/>
<dbReference type="TreeFam" id="TF320547"/>
<dbReference type="Reactome" id="R-MMU-9013149">
    <property type="pathway name" value="RAC1 GTPase cycle"/>
</dbReference>
<dbReference type="Reactome" id="R-MMU-9696264">
    <property type="pathway name" value="RND3 GTPase cycle"/>
</dbReference>
<dbReference type="Reactome" id="R-MMU-9696270">
    <property type="pathway name" value="RND2 GTPase cycle"/>
</dbReference>
<dbReference type="BioGRID-ORCS" id="64652">
    <property type="hits" value="7 hits in 76 CRISPR screens"/>
</dbReference>
<dbReference type="ChiTaRS" id="Nisch">
    <property type="organism name" value="mouse"/>
</dbReference>
<dbReference type="PRO" id="PR:Q80TM9"/>
<dbReference type="Proteomes" id="UP000000589">
    <property type="component" value="Chromosome 14"/>
</dbReference>
<dbReference type="RNAct" id="Q80TM9">
    <property type="molecule type" value="protein"/>
</dbReference>
<dbReference type="Bgee" id="ENSMUSG00000021910">
    <property type="expression patterns" value="Expressed in internal carotid artery and 270 other cell types or tissues"/>
</dbReference>
<dbReference type="ExpressionAtlas" id="Q80TM9">
    <property type="expression patterns" value="baseline and differential"/>
</dbReference>
<dbReference type="GO" id="GO:0005829">
    <property type="term" value="C:cytosol"/>
    <property type="evidence" value="ECO:0000314"/>
    <property type="project" value="MGI"/>
</dbReference>
<dbReference type="GO" id="GO:0005769">
    <property type="term" value="C:early endosome"/>
    <property type="evidence" value="ECO:0007669"/>
    <property type="project" value="UniProtKB-SubCell"/>
</dbReference>
<dbReference type="GO" id="GO:0045171">
    <property type="term" value="C:intercellular bridge"/>
    <property type="evidence" value="ECO:0007669"/>
    <property type="project" value="Ensembl"/>
</dbReference>
<dbReference type="GO" id="GO:0015630">
    <property type="term" value="C:microtubule cytoskeleton"/>
    <property type="evidence" value="ECO:0007669"/>
    <property type="project" value="Ensembl"/>
</dbReference>
<dbReference type="GO" id="GO:0005654">
    <property type="term" value="C:nucleoplasm"/>
    <property type="evidence" value="ECO:0007669"/>
    <property type="project" value="Ensembl"/>
</dbReference>
<dbReference type="GO" id="GO:0005886">
    <property type="term" value="C:plasma membrane"/>
    <property type="evidence" value="ECO:0007669"/>
    <property type="project" value="UniProtKB-SubCell"/>
</dbReference>
<dbReference type="GO" id="GO:0055037">
    <property type="term" value="C:recycling endosome"/>
    <property type="evidence" value="ECO:0007669"/>
    <property type="project" value="UniProtKB-SubCell"/>
</dbReference>
<dbReference type="GO" id="GO:0042802">
    <property type="term" value="F:identical protein binding"/>
    <property type="evidence" value="ECO:0007669"/>
    <property type="project" value="Ensembl"/>
</dbReference>
<dbReference type="GO" id="GO:0005178">
    <property type="term" value="F:integrin binding"/>
    <property type="evidence" value="ECO:0000314"/>
    <property type="project" value="MGI"/>
</dbReference>
<dbReference type="GO" id="GO:0035091">
    <property type="term" value="F:phosphatidylinositol binding"/>
    <property type="evidence" value="ECO:0007669"/>
    <property type="project" value="InterPro"/>
</dbReference>
<dbReference type="GO" id="GO:0030036">
    <property type="term" value="P:actin cytoskeleton organization"/>
    <property type="evidence" value="ECO:0000314"/>
    <property type="project" value="MGI"/>
</dbReference>
<dbReference type="GO" id="GO:0006915">
    <property type="term" value="P:apoptotic process"/>
    <property type="evidence" value="ECO:0007669"/>
    <property type="project" value="UniProtKB-KW"/>
</dbReference>
<dbReference type="GO" id="GO:0030336">
    <property type="term" value="P:negative regulation of cell migration"/>
    <property type="evidence" value="ECO:0000314"/>
    <property type="project" value="MGI"/>
</dbReference>
<dbReference type="GO" id="GO:0016601">
    <property type="term" value="P:Rac protein signal transduction"/>
    <property type="evidence" value="ECO:0000314"/>
    <property type="project" value="MGI"/>
</dbReference>
<dbReference type="CDD" id="cd06875">
    <property type="entry name" value="PX_IRAS"/>
    <property type="match status" value="1"/>
</dbReference>
<dbReference type="FunFam" id="3.30.1520.10:FF:000020">
    <property type="entry name" value="nischarin isoform X1"/>
    <property type="match status" value="1"/>
</dbReference>
<dbReference type="FunFam" id="3.80.10.10:FF:000102">
    <property type="entry name" value="nischarin isoform X1"/>
    <property type="match status" value="1"/>
</dbReference>
<dbReference type="FunFam" id="3.80.10.10:FF:000109">
    <property type="entry name" value="nischarin isoform X1"/>
    <property type="match status" value="1"/>
</dbReference>
<dbReference type="Gene3D" id="3.30.1520.10">
    <property type="entry name" value="Phox-like domain"/>
    <property type="match status" value="1"/>
</dbReference>
<dbReference type="Gene3D" id="3.80.10.10">
    <property type="entry name" value="Ribonuclease Inhibitor"/>
    <property type="match status" value="2"/>
</dbReference>
<dbReference type="InterPro" id="IPR001611">
    <property type="entry name" value="Leu-rich_rpt"/>
</dbReference>
<dbReference type="InterPro" id="IPR025875">
    <property type="entry name" value="Leu-rich_rpt_4"/>
</dbReference>
<dbReference type="InterPro" id="IPR032675">
    <property type="entry name" value="LRR_dom_sf"/>
</dbReference>
<dbReference type="InterPro" id="IPR037904">
    <property type="entry name" value="Nischarin_PX"/>
</dbReference>
<dbReference type="InterPro" id="IPR001683">
    <property type="entry name" value="PX_dom"/>
</dbReference>
<dbReference type="InterPro" id="IPR036871">
    <property type="entry name" value="PX_dom_sf"/>
</dbReference>
<dbReference type="PANTHER" id="PTHR15454:SF35">
    <property type="entry name" value="NISCHARIN"/>
    <property type="match status" value="1"/>
</dbReference>
<dbReference type="PANTHER" id="PTHR15454">
    <property type="entry name" value="NISCHARIN RELATED"/>
    <property type="match status" value="1"/>
</dbReference>
<dbReference type="Pfam" id="PF12799">
    <property type="entry name" value="LRR_4"/>
    <property type="match status" value="1"/>
</dbReference>
<dbReference type="Pfam" id="PF00787">
    <property type="entry name" value="PX"/>
    <property type="match status" value="1"/>
</dbReference>
<dbReference type="SMART" id="SM00365">
    <property type="entry name" value="LRR_SD22"/>
    <property type="match status" value="5"/>
</dbReference>
<dbReference type="SMART" id="SM00312">
    <property type="entry name" value="PX"/>
    <property type="match status" value="1"/>
</dbReference>
<dbReference type="SUPFAM" id="SSF52075">
    <property type="entry name" value="Outer arm dynein light chain 1"/>
    <property type="match status" value="1"/>
</dbReference>
<dbReference type="SUPFAM" id="SSF64268">
    <property type="entry name" value="PX domain"/>
    <property type="match status" value="1"/>
</dbReference>
<dbReference type="PROSITE" id="PS51450">
    <property type="entry name" value="LRR"/>
    <property type="match status" value="6"/>
</dbReference>
<dbReference type="PROSITE" id="PS50195">
    <property type="entry name" value="PX"/>
    <property type="match status" value="1"/>
</dbReference>
<gene>
    <name type="primary">Nisch</name>
    <name type="synonym">Kiaa0975</name>
</gene>
<reference key="1">
    <citation type="journal article" date="2000" name="J. Cell Biol.">
        <title>Nischarin, a novel protein that interacts with the integrin alpha5 subunit and inhibits cell migration.</title>
        <authorList>
            <person name="Alahari S.K."/>
            <person name="Lee J.W."/>
            <person name="Juliano R.L."/>
        </authorList>
    </citation>
    <scope>NUCLEOTIDE SEQUENCE [MRNA] (ISOFORM 3)</scope>
    <scope>FUNCTION</scope>
    <scope>INTERACTION WITH ITGA5</scope>
    <scope>SUBCELLULAR LOCATION</scope>
    <scope>DEVELOPMENTAL STAGE</scope>
    <scope>TISSUE SPECIFICITY</scope>
    <source>
        <strain>ICR</strain>
        <tissue>Brain</tissue>
    </source>
</reference>
<reference key="2">
    <citation type="journal article" date="2003" name="DNA Res.">
        <title>Prediction of the coding sequences of mouse homologues of KIAA gene: II. The complete nucleotide sequences of 400 mouse KIAA-homologous cDNAs identified by screening of terminal sequences of cDNA clones randomly sampled from size-fractionated libraries.</title>
        <authorList>
            <person name="Okazaki N."/>
            <person name="Kikuno R."/>
            <person name="Ohara R."/>
            <person name="Inamoto S."/>
            <person name="Aizawa H."/>
            <person name="Yuasa S."/>
            <person name="Nakajima D."/>
            <person name="Nagase T."/>
            <person name="Ohara O."/>
            <person name="Koga H."/>
        </authorList>
    </citation>
    <scope>NUCLEOTIDE SEQUENCE [LARGE SCALE MRNA] (ISOFORM 2)</scope>
    <source>
        <tissue>Brain</tissue>
    </source>
</reference>
<reference key="3">
    <citation type="journal article" date="2005" name="Science">
        <title>The transcriptional landscape of the mammalian genome.</title>
        <authorList>
            <person name="Carninci P."/>
            <person name="Kasukawa T."/>
            <person name="Katayama S."/>
            <person name="Gough J."/>
            <person name="Frith M.C."/>
            <person name="Maeda N."/>
            <person name="Oyama R."/>
            <person name="Ravasi T."/>
            <person name="Lenhard B."/>
            <person name="Wells C."/>
            <person name="Kodzius R."/>
            <person name="Shimokawa K."/>
            <person name="Bajic V.B."/>
            <person name="Brenner S.E."/>
            <person name="Batalov S."/>
            <person name="Forrest A.R."/>
            <person name="Zavolan M."/>
            <person name="Davis M.J."/>
            <person name="Wilming L.G."/>
            <person name="Aidinis V."/>
            <person name="Allen J.E."/>
            <person name="Ambesi-Impiombato A."/>
            <person name="Apweiler R."/>
            <person name="Aturaliya R.N."/>
            <person name="Bailey T.L."/>
            <person name="Bansal M."/>
            <person name="Baxter L."/>
            <person name="Beisel K.W."/>
            <person name="Bersano T."/>
            <person name="Bono H."/>
            <person name="Chalk A.M."/>
            <person name="Chiu K.P."/>
            <person name="Choudhary V."/>
            <person name="Christoffels A."/>
            <person name="Clutterbuck D.R."/>
            <person name="Crowe M.L."/>
            <person name="Dalla E."/>
            <person name="Dalrymple B.P."/>
            <person name="de Bono B."/>
            <person name="Della Gatta G."/>
            <person name="di Bernardo D."/>
            <person name="Down T."/>
            <person name="Engstrom P."/>
            <person name="Fagiolini M."/>
            <person name="Faulkner G."/>
            <person name="Fletcher C.F."/>
            <person name="Fukushima T."/>
            <person name="Furuno M."/>
            <person name="Futaki S."/>
            <person name="Gariboldi M."/>
            <person name="Georgii-Hemming P."/>
            <person name="Gingeras T.R."/>
            <person name="Gojobori T."/>
            <person name="Green R.E."/>
            <person name="Gustincich S."/>
            <person name="Harbers M."/>
            <person name="Hayashi Y."/>
            <person name="Hensch T.K."/>
            <person name="Hirokawa N."/>
            <person name="Hill D."/>
            <person name="Huminiecki L."/>
            <person name="Iacono M."/>
            <person name="Ikeo K."/>
            <person name="Iwama A."/>
            <person name="Ishikawa T."/>
            <person name="Jakt M."/>
            <person name="Kanapin A."/>
            <person name="Katoh M."/>
            <person name="Kawasawa Y."/>
            <person name="Kelso J."/>
            <person name="Kitamura H."/>
            <person name="Kitano H."/>
            <person name="Kollias G."/>
            <person name="Krishnan S.P."/>
            <person name="Kruger A."/>
            <person name="Kummerfeld S.K."/>
            <person name="Kurochkin I.V."/>
            <person name="Lareau L.F."/>
            <person name="Lazarevic D."/>
            <person name="Lipovich L."/>
            <person name="Liu J."/>
            <person name="Liuni S."/>
            <person name="McWilliam S."/>
            <person name="Madan Babu M."/>
            <person name="Madera M."/>
            <person name="Marchionni L."/>
            <person name="Matsuda H."/>
            <person name="Matsuzawa S."/>
            <person name="Miki H."/>
            <person name="Mignone F."/>
            <person name="Miyake S."/>
            <person name="Morris K."/>
            <person name="Mottagui-Tabar S."/>
            <person name="Mulder N."/>
            <person name="Nakano N."/>
            <person name="Nakauchi H."/>
            <person name="Ng P."/>
            <person name="Nilsson R."/>
            <person name="Nishiguchi S."/>
            <person name="Nishikawa S."/>
            <person name="Nori F."/>
            <person name="Ohara O."/>
            <person name="Okazaki Y."/>
            <person name="Orlando V."/>
            <person name="Pang K.C."/>
            <person name="Pavan W.J."/>
            <person name="Pavesi G."/>
            <person name="Pesole G."/>
            <person name="Petrovsky N."/>
            <person name="Piazza S."/>
            <person name="Reed J."/>
            <person name="Reid J.F."/>
            <person name="Ring B.Z."/>
            <person name="Ringwald M."/>
            <person name="Rost B."/>
            <person name="Ruan Y."/>
            <person name="Salzberg S.L."/>
            <person name="Sandelin A."/>
            <person name="Schneider C."/>
            <person name="Schoenbach C."/>
            <person name="Sekiguchi K."/>
            <person name="Semple C.A."/>
            <person name="Seno S."/>
            <person name="Sessa L."/>
            <person name="Sheng Y."/>
            <person name="Shibata Y."/>
            <person name="Shimada H."/>
            <person name="Shimada K."/>
            <person name="Silva D."/>
            <person name="Sinclair B."/>
            <person name="Sperling S."/>
            <person name="Stupka E."/>
            <person name="Sugiura K."/>
            <person name="Sultana R."/>
            <person name="Takenaka Y."/>
            <person name="Taki K."/>
            <person name="Tammoja K."/>
            <person name="Tan S.L."/>
            <person name="Tang S."/>
            <person name="Taylor M.S."/>
            <person name="Tegner J."/>
            <person name="Teichmann S.A."/>
            <person name="Ueda H.R."/>
            <person name="van Nimwegen E."/>
            <person name="Verardo R."/>
            <person name="Wei C.L."/>
            <person name="Yagi K."/>
            <person name="Yamanishi H."/>
            <person name="Zabarovsky E."/>
            <person name="Zhu S."/>
            <person name="Zimmer A."/>
            <person name="Hide W."/>
            <person name="Bult C."/>
            <person name="Grimmond S.M."/>
            <person name="Teasdale R.D."/>
            <person name="Liu E.T."/>
            <person name="Brusic V."/>
            <person name="Quackenbush J."/>
            <person name="Wahlestedt C."/>
            <person name="Mattick J.S."/>
            <person name="Hume D.A."/>
            <person name="Kai C."/>
            <person name="Sasaki D."/>
            <person name="Tomaru Y."/>
            <person name="Fukuda S."/>
            <person name="Kanamori-Katayama M."/>
            <person name="Suzuki M."/>
            <person name="Aoki J."/>
            <person name="Arakawa T."/>
            <person name="Iida J."/>
            <person name="Imamura K."/>
            <person name="Itoh M."/>
            <person name="Kato T."/>
            <person name="Kawaji H."/>
            <person name="Kawagashira N."/>
            <person name="Kawashima T."/>
            <person name="Kojima M."/>
            <person name="Kondo S."/>
            <person name="Konno H."/>
            <person name="Nakano K."/>
            <person name="Ninomiya N."/>
            <person name="Nishio T."/>
            <person name="Okada M."/>
            <person name="Plessy C."/>
            <person name="Shibata K."/>
            <person name="Shiraki T."/>
            <person name="Suzuki S."/>
            <person name="Tagami M."/>
            <person name="Waki K."/>
            <person name="Watahiki A."/>
            <person name="Okamura-Oho Y."/>
            <person name="Suzuki H."/>
            <person name="Kawai J."/>
            <person name="Hayashizaki Y."/>
        </authorList>
    </citation>
    <scope>NUCLEOTIDE SEQUENCE [LARGE SCALE MRNA] (ISOFORMS 4; 5 AND 7)</scope>
    <source>
        <strain>C57BL/6J</strain>
        <tissue>Cerebellum</tissue>
        <tissue>Lung</tissue>
    </source>
</reference>
<reference key="4">
    <citation type="journal article" date="2009" name="PLoS Biol.">
        <title>Lineage-specific biology revealed by a finished genome assembly of the mouse.</title>
        <authorList>
            <person name="Church D.M."/>
            <person name="Goodstadt L."/>
            <person name="Hillier L.W."/>
            <person name="Zody M.C."/>
            <person name="Goldstein S."/>
            <person name="She X."/>
            <person name="Bult C.J."/>
            <person name="Agarwala R."/>
            <person name="Cherry J.L."/>
            <person name="DiCuccio M."/>
            <person name="Hlavina W."/>
            <person name="Kapustin Y."/>
            <person name="Meric P."/>
            <person name="Maglott D."/>
            <person name="Birtle Z."/>
            <person name="Marques A.C."/>
            <person name="Graves T."/>
            <person name="Zhou S."/>
            <person name="Teague B."/>
            <person name="Potamousis K."/>
            <person name="Churas C."/>
            <person name="Place M."/>
            <person name="Herschleb J."/>
            <person name="Runnheim R."/>
            <person name="Forrest D."/>
            <person name="Amos-Landgraf J."/>
            <person name="Schwartz D.C."/>
            <person name="Cheng Z."/>
            <person name="Lindblad-Toh K."/>
            <person name="Eichler E.E."/>
            <person name="Ponting C.P."/>
        </authorList>
    </citation>
    <scope>NUCLEOTIDE SEQUENCE [LARGE SCALE GENOMIC DNA]</scope>
    <source>
        <strain>C57BL/6J</strain>
    </source>
</reference>
<reference key="5">
    <citation type="journal article" date="2004" name="Genome Res.">
        <title>The status, quality, and expansion of the NIH full-length cDNA project: the Mammalian Gene Collection (MGC).</title>
        <authorList>
            <consortium name="The MGC Project Team"/>
        </authorList>
    </citation>
    <scope>NUCLEOTIDE SEQUENCE [LARGE SCALE MRNA] (ISOFORM 6)</scope>
    <scope>NUCLEOTIDE SEQUENCE [LARGE SCALE MRNA] OF 215-1593 (ISOFORM 1)</scope>
    <source>
        <strain>FVB/N</strain>
        <tissue>Colon</tissue>
        <tissue>Mammary tumor</tissue>
    </source>
</reference>
<reference key="6">
    <citation type="submission" date="2001-04" db="EMBL/GenBank/DDBJ databases">
        <authorList>
            <person name="Bailey T.L."/>
            <person name="Smith D.R."/>
            <person name="McGaugh B.D."/>
            <person name="Mitchell J."/>
        </authorList>
    </citation>
    <scope>NUCLEOTIDE SEQUENCE [MRNA] OF 1238-1593 (ISOFORM 1)</scope>
    <source>
        <tissue>Carcinoma</tissue>
    </source>
</reference>
<reference key="7">
    <citation type="submission" date="1999-04" db="EMBL/GenBank/DDBJ databases">
        <authorList>
            <person name="Cain D."/>
            <person name="Carter J."/>
            <person name="McLean W."/>
            <person name="Robbins L."/>
        </authorList>
    </citation>
    <scope>NUCLEOTIDE SEQUENCE [MRNA] OF 1386-1593 (ISOFORM 1)</scope>
    <source>
        <tissue>Lung</tissue>
    </source>
</reference>
<reference key="8">
    <citation type="journal article" date="2003" name="Exp. Cell Res.">
        <title>Nischarin inhibits Rac induced migration and invasion of epithelial cells by affecting signaling cascades involving PAK.</title>
        <authorList>
            <person name="Alahari S.K."/>
        </authorList>
    </citation>
    <scope>FUNCTION</scope>
</reference>
<reference key="9">
    <citation type="journal article" date="2004" name="Biochem. J.">
        <title>A membrane proximal region of the integrin alpha5 subunit is important for its interaction with nischarin.</title>
        <authorList>
            <person name="Alahari S.K."/>
            <person name="Nasrallah H."/>
        </authorList>
    </citation>
    <scope>INTERACTION WITH ITGA5</scope>
</reference>
<reference key="10">
    <citation type="journal article" date="2004" name="EMBO J.">
        <title>The integrin-binding protein Nischarin regulates cell migration by inhibiting PAK.</title>
        <authorList>
            <person name="Alahari S.K."/>
            <person name="Reddig P.J."/>
            <person name="Juliano R.L."/>
        </authorList>
    </citation>
    <scope>FUNCTION</scope>
    <scope>IDENTIFICATION IN A COMPLEX WITH ITGA5 AND PAK1</scope>
    <scope>INTERACTION WITH PAK1</scope>
    <scope>SUBCELLULAR LOCATION</scope>
</reference>
<reference key="11">
    <citation type="journal article" date="2005" name="J. Biol. Chem.">
        <title>Regulation of p21-activated kinase-independent Rac1 signal transduction by Nischarin.</title>
        <authorList>
            <person name="Reddig P.J."/>
            <person name="Xu D."/>
            <person name="Juliano R.L."/>
        </authorList>
    </citation>
    <scope>FUNCTION</scope>
    <scope>INTERACTION WITH RAC1</scope>
    <scope>SUBCELLULAR LOCATION</scope>
</reference>
<reference key="12">
    <citation type="journal article" date="2006" name="FEBS Lett.">
        <title>Nischarin as a functional imidazoline (I1) receptor.</title>
        <authorList>
            <person name="Zhang J."/>
            <person name="Abdel-Rahman A.A."/>
        </authorList>
    </citation>
    <scope>FUNCTION</scope>
    <scope>SUBCELLULAR LOCATION</scope>
</reference>
<reference key="13">
    <citation type="journal article" date="2007" name="Proc. Natl. Acad. Sci. U.S.A.">
        <title>Large-scale phosphorylation analysis of mouse liver.</title>
        <authorList>
            <person name="Villen J."/>
            <person name="Beausoleil S.A."/>
            <person name="Gerber S.A."/>
            <person name="Gygi S.P."/>
        </authorList>
    </citation>
    <scope>PHOSPHORYLATION [LARGE SCALE ANALYSIS] AT SER-543</scope>
    <scope>IDENTIFICATION BY MASS SPECTROMETRY [LARGE SCALE ANALYSIS]</scope>
    <source>
        <tissue>Liver</tissue>
    </source>
</reference>
<reference key="14">
    <citation type="journal article" date="2008" name="Mol. Cell. Biol.">
        <title>Nischarin inhibits LIM kinase to regulate cofilin phosphorylation and cell invasion.</title>
        <authorList>
            <person name="Ding Y."/>
            <person name="Milosavljevic T."/>
            <person name="Alahari S.K."/>
        </authorList>
    </citation>
    <scope>FUNCTION</scope>
    <scope>IDENTIFICATION IN A COMPLEX WITH LIMK1 AND PAK1</scope>
    <scope>INTERACTION WITH LIMK1 AND LIMK2</scope>
</reference>
<reference key="15">
    <citation type="journal article" date="2009" name="Immunity">
        <title>The phagosomal proteome in interferon-gamma-activated macrophages.</title>
        <authorList>
            <person name="Trost M."/>
            <person name="English L."/>
            <person name="Lemieux S."/>
            <person name="Courcelles M."/>
            <person name="Desjardins M."/>
            <person name="Thibault P."/>
        </authorList>
    </citation>
    <scope>IDENTIFICATION BY MASS SPECTROMETRY [LARGE SCALE ANALYSIS]</scope>
</reference>
<reference key="16">
    <citation type="journal article" date="2010" name="Cell">
        <title>A tissue-specific atlas of mouse protein phosphorylation and expression.</title>
        <authorList>
            <person name="Huttlin E.L."/>
            <person name="Jedrychowski M.P."/>
            <person name="Elias J.E."/>
            <person name="Goswami T."/>
            <person name="Rad R."/>
            <person name="Beausoleil S.A."/>
            <person name="Villen J."/>
            <person name="Haas W."/>
            <person name="Sowa M.E."/>
            <person name="Gygi S.P."/>
        </authorList>
    </citation>
    <scope>PHOSPHORYLATION [LARGE SCALE ANALYSIS] AT SER-543; SER-545; SER-548 AND THR-1371</scope>
    <scope>IDENTIFICATION BY MASS SPECTROMETRY [LARGE SCALE ANALYSIS]</scope>
    <source>
        <tissue>Brain</tissue>
        <tissue>Heart</tissue>
        <tissue>Kidney</tissue>
        <tissue>Lung</tissue>
        <tissue>Pancreas</tissue>
        <tissue>Spleen</tissue>
        <tissue>Testis</tissue>
    </source>
</reference>
<organism>
    <name type="scientific">Mus musculus</name>
    <name type="common">Mouse</name>
    <dbReference type="NCBI Taxonomy" id="10090"/>
    <lineage>
        <taxon>Eukaryota</taxon>
        <taxon>Metazoa</taxon>
        <taxon>Chordata</taxon>
        <taxon>Craniata</taxon>
        <taxon>Vertebrata</taxon>
        <taxon>Euteleostomi</taxon>
        <taxon>Mammalia</taxon>
        <taxon>Eutheria</taxon>
        <taxon>Euarchontoglires</taxon>
        <taxon>Glires</taxon>
        <taxon>Rodentia</taxon>
        <taxon>Myomorpha</taxon>
        <taxon>Muroidea</taxon>
        <taxon>Muridae</taxon>
        <taxon>Murinae</taxon>
        <taxon>Mus</taxon>
        <taxon>Mus</taxon>
    </lineage>
</organism>
<accession>Q80TM9</accession>
<accession>Q2YDV7</accession>
<accession>Q8C354</accession>
<accession>Q8C4X9</accession>
<accession>Q8CBH0</accession>
<accession>Q91XW6</accession>
<accession>Q99LG6</accession>
<accession>Q9EPW8</accession>
<accession>Q9WUM6</accession>
<feature type="chain" id="PRO_0000348266" description="Nischarin">
    <location>
        <begin position="1"/>
        <end position="1593"/>
    </location>
</feature>
<feature type="domain" description="PX" evidence="4">
    <location>
        <begin position="12"/>
        <end position="122"/>
    </location>
</feature>
<feature type="repeat" description="LRR 1">
    <location>
        <begin position="290"/>
        <end position="311"/>
    </location>
</feature>
<feature type="repeat" description="LRR 2">
    <location>
        <begin position="313"/>
        <end position="334"/>
    </location>
</feature>
<feature type="repeat" description="LRR 3">
    <location>
        <begin position="335"/>
        <end position="356"/>
    </location>
</feature>
<feature type="repeat" description="LRR 4">
    <location>
        <begin position="358"/>
        <end position="379"/>
    </location>
</feature>
<feature type="repeat" description="LRR 5">
    <location>
        <begin position="380"/>
        <end position="401"/>
    </location>
</feature>
<feature type="repeat" description="LRR 6">
    <location>
        <begin position="405"/>
        <end position="426"/>
    </location>
</feature>
<feature type="repeat" description="1">
    <location>
        <begin position="1081"/>
        <end position="1086"/>
    </location>
</feature>
<feature type="repeat" description="2">
    <location>
        <begin position="1087"/>
        <end position="1092"/>
    </location>
</feature>
<feature type="repeat" description="3">
    <location>
        <begin position="1093"/>
        <end position="1098"/>
    </location>
</feature>
<feature type="repeat" description="4">
    <location>
        <begin position="1099"/>
        <end position="1104"/>
    </location>
</feature>
<feature type="repeat" description="5">
    <location>
        <begin position="1105"/>
        <end position="1110"/>
    </location>
</feature>
<feature type="repeat" description="6">
    <location>
        <begin position="1111"/>
        <end position="1116"/>
    </location>
</feature>
<feature type="repeat" description="7">
    <location>
        <begin position="1123"/>
        <end position="1128"/>
    </location>
</feature>
<feature type="repeat" description="8">
    <location>
        <begin position="1129"/>
        <end position="1134"/>
    </location>
</feature>
<feature type="repeat" description="9">
    <location>
        <begin position="1135"/>
        <end position="1140"/>
    </location>
</feature>
<feature type="repeat" description="10">
    <location>
        <begin position="1141"/>
        <end position="1146"/>
    </location>
</feature>
<feature type="region of interest" description="Necessary for binding to phosphoinositide-3-P; not sufficient for targeting to endosomes" evidence="1">
    <location>
        <begin position="1"/>
        <end position="134"/>
    </location>
</feature>
<feature type="region of interest" description="Necessary for homooligomerization and targeting to endosomes" evidence="1">
    <location>
        <begin position="121"/>
        <end position="695"/>
    </location>
</feature>
<feature type="region of interest" description="Interaction with PAK1" evidence="8">
    <location>
        <begin position="246"/>
        <end position="869"/>
    </location>
</feature>
<feature type="region of interest" description="Disordered" evidence="5">
    <location>
        <begin position="466"/>
        <end position="499"/>
    </location>
</feature>
<feature type="region of interest" description="Disordered" evidence="5">
    <location>
        <begin position="629"/>
        <end position="687"/>
    </location>
</feature>
<feature type="region of interest" description="Interaction with LIMK">
    <location>
        <begin position="661"/>
        <end position="869"/>
    </location>
</feature>
<feature type="region of interest" description="Interaction with ITGA5">
    <location>
        <begin position="709"/>
        <end position="807"/>
    </location>
</feature>
<feature type="region of interest" description="Disordered" evidence="5">
    <location>
        <begin position="1016"/>
        <end position="1185"/>
    </location>
</feature>
<feature type="region of interest" description="10 X 6 AA tandem repeat of A-E-A-P-A-A">
    <location>
        <begin position="1081"/>
        <end position="1146"/>
    </location>
</feature>
<feature type="coiled-coil region" evidence="3">
    <location>
        <begin position="624"/>
        <end position="694"/>
    </location>
</feature>
<feature type="compositionally biased region" description="Basic and acidic residues" evidence="5">
    <location>
        <begin position="466"/>
        <end position="480"/>
    </location>
</feature>
<feature type="compositionally biased region" description="Pro residues" evidence="5">
    <location>
        <begin position="482"/>
        <end position="496"/>
    </location>
</feature>
<feature type="compositionally biased region" description="Acidic residues" evidence="5">
    <location>
        <begin position="638"/>
        <end position="650"/>
    </location>
</feature>
<feature type="compositionally biased region" description="Acidic residues" evidence="5">
    <location>
        <begin position="662"/>
        <end position="685"/>
    </location>
</feature>
<feature type="compositionally biased region" description="Low complexity" evidence="5">
    <location>
        <begin position="1038"/>
        <end position="1069"/>
    </location>
</feature>
<feature type="compositionally biased region" description="Low complexity" evidence="5">
    <location>
        <begin position="1081"/>
        <end position="1158"/>
    </location>
</feature>
<feature type="compositionally biased region" description="Pro residues" evidence="5">
    <location>
        <begin position="1159"/>
        <end position="1179"/>
    </location>
</feature>
<feature type="modified residue" description="Phosphoserine" evidence="17 18">
    <location>
        <position position="543"/>
    </location>
</feature>
<feature type="modified residue" description="Phosphoserine" evidence="18">
    <location>
        <position position="545"/>
    </location>
</feature>
<feature type="modified residue" description="Phosphoserine" evidence="18">
    <location>
        <position position="548"/>
    </location>
</feature>
<feature type="modified residue" description="Phosphothreonine" evidence="18">
    <location>
        <position position="1371"/>
    </location>
</feature>
<feature type="modified residue" description="Phosphoserine" evidence="2">
    <location>
        <position position="1373"/>
    </location>
</feature>
<feature type="splice variant" id="VSP_035136" description="In isoform 3." evidence="12">
    <location>
        <begin position="1"/>
        <end position="245"/>
    </location>
</feature>
<feature type="splice variant" id="VSP_035137" description="In isoform 7." evidence="15">
    <original>EVNGVTAALAEELFEKGEQLLGAGEVFAIRPL</original>
    <variation>VSSFGALCFAYEPTATKAVGLGFEETQTGPWP</variation>
    <location>
        <begin position="122"/>
        <end position="153"/>
    </location>
</feature>
<feature type="splice variant" id="VSP_035138" description="In isoform 7." evidence="15">
    <location>
        <begin position="154"/>
        <end position="1593"/>
    </location>
</feature>
<feature type="splice variant" id="VSP_035139" description="In isoform 5." evidence="15">
    <original>HLY</original>
    <variation>ATS</variation>
    <location>
        <begin position="332"/>
        <end position="334"/>
    </location>
</feature>
<feature type="splice variant" id="VSP_035140" description="In isoform 5." evidence="15">
    <location>
        <begin position="335"/>
        <end position="1593"/>
    </location>
</feature>
<feature type="splice variant" id="VSP_035141" description="In isoform 2." evidence="13">
    <location>
        <begin position="348"/>
        <end position="500"/>
    </location>
</feature>
<feature type="splice variant" id="VSP_035142" description="In isoform 4." evidence="15">
    <original>ICLDDVATTEKELDTVEVLKAIQKAKDVKSKLSNTE</original>
    <variation>VSPRSSSRAQRDWQGKPSLSAKADRGKAVHSVLVFF</variation>
    <location>
        <begin position="437"/>
        <end position="472"/>
    </location>
</feature>
<feature type="splice variant" id="VSP_035143" description="In isoform 4." evidence="15">
    <location>
        <begin position="473"/>
        <end position="1593"/>
    </location>
</feature>
<feature type="splice variant" id="VSP_035144" description="In isoform 6." evidence="14">
    <original>MFVQ</original>
    <variation>LGDE</variation>
    <location>
        <begin position="513"/>
        <end position="516"/>
    </location>
</feature>
<feature type="splice variant" id="VSP_035145" description="In isoform 6." evidence="14">
    <location>
        <begin position="517"/>
        <end position="1593"/>
    </location>
</feature>
<feature type="sequence conflict" description="In Ref. 2; BAC65694." evidence="16" ref="2">
    <original>R</original>
    <variation>P</variation>
    <location>
        <position position="607"/>
    </location>
</feature>
<feature type="sequence conflict" description="In Ref. 2; BAC65694." evidence="16" ref="2">
    <location>
        <begin position="1123"/>
        <end position="1128"/>
    </location>
</feature>
<feature type="sequence conflict" description="In Ref. 1; AAG42100." evidence="16" ref="1">
    <original>R</original>
    <variation>RGPAPAG</variation>
    <location>
        <position position="1172"/>
    </location>
</feature>
<feature type="sequence conflict" description="In Ref. 6; AAK52087." evidence="16" ref="6">
    <original>A</original>
    <variation>G</variation>
    <location>
        <position position="1518"/>
    </location>
</feature>
<comment type="function">
    <text evidence="1 6 7 8 9 10 11">Acts either as the functional imidazoline-1 receptor (I1R) candidate or as a membrane-associated mediator of the I1R signaling. Binds numerous imidazoline ligands that induces initiation of cell-signaling cascades triggering to cell survival, growth and migration. Its activation by the agonist rilmenidine induces an increase in phosphorylation of mitogen-activated protein kinases MAPK1 and MAPK3 in rostral ventrolateral medulla (RVLM) neurons that exhibited rilmenidine-evoked hypotension (By similarity). Blocking its activation with efaroxan abolished rilmenidine-induced mitogen-activated protein kinase phosphorylation in RVLM neurons (By similarity). Acts as a modulator of Rac-regulated signal transduction pathways. Suppresses Rac1-stimulated cell migration by interacting with PAK1 and inhibiting its kinase activity. Also blocks Pak-independent Rac signaling by interacting with RAC1 and inhibiting Rac1-stimulated NF-kB response element and cyclin D1 promoter activation. Also inhibits LIMK1 kinase activity by reducing LIMK1 'Tyr-508' phosphorylation. Inhibits Rac-induced cell migration and invasion in breast and colon epithelial cells. Inhibits lamellipodia formation, when overexpressed. Plays a role in protection against apoptosis (By similarity). Involved in association with IRS4 in the enhancement of insulin activation of MAPK1 and MAPK3 (By similarity). When overexpressed, induces a redistribution of cell surface ITGA5 integrin to intracellular endosomal structures (By similarity).</text>
</comment>
<comment type="subunit">
    <text evidence="1">Homooligomer (By similarity). Interacts with GRB2 (By similarity). Interacts with PIK3R1; probably associates with the PI3-kinase complex (By similarity). Interacts with IRS4 (By similarity). Found in a complex with ITGA5 and PAK1. Found in a complex with LIMK1 and PAK1. Interacts with ITGA5 (via cytoplasmic domain); this interaction is direct. Interacts with PAK1 (via kinase domain); this interaction is direct and is increased upon activation of PAK1. Interacts with LIMK1 (via PDZ and kinase domain); this interaction is direct. Interacts with LIMK2; this interaction depends on LIMK2 activity. Interacts with RAC1 (activated state). Interacts with STK11; this interaction may increase STK11 activity (By similarity).</text>
</comment>
<comment type="subcellular location">
    <subcellularLocation>
        <location evidence="1">Cell membrane</location>
    </subcellularLocation>
    <subcellularLocation>
        <location evidence="6 8 9 10">Cytoplasm</location>
    </subcellularLocation>
    <subcellularLocation>
        <location evidence="1">Early endosome</location>
    </subcellularLocation>
    <subcellularLocation>
        <location evidence="1">Recycling endosome</location>
    </subcellularLocation>
    <text evidence="1">Enriched in the early/sorting and recycling endosomes (By similarity). Colocalized in early/sorting endosomes with EEA1 and SNX2 and in recycling endosomes with transferrin receptor (By similarity). Colocalized with MAPK1 and MAPK3 in RVLM neurons (By similarity). Detected in the perinuclear region partially associated with punctate structures. Colocalizes with PAK1 in cytoplasm, vesicular structures in the perinuclear area and membrane ruffles. Colocalizes with RAC1 in the cytoplasm and vesicles structures.</text>
</comment>
<comment type="alternative products">
    <event type="alternative splicing"/>
    <isoform>
        <id>Q80TM9-1</id>
        <name>1</name>
        <sequence type="displayed"/>
    </isoform>
    <isoform>
        <id>Q80TM9-2</id>
        <name>2</name>
        <sequence type="described" ref="VSP_035141"/>
    </isoform>
    <isoform>
        <id>Q80TM9-3</id>
        <name>3</name>
        <sequence type="described" ref="VSP_035136"/>
    </isoform>
    <isoform>
        <id>Q80TM9-4</id>
        <name>4</name>
        <sequence type="described" ref="VSP_035142 VSP_035143"/>
    </isoform>
    <isoform>
        <id>Q80TM9-5</id>
        <name>5</name>
        <sequence type="described" ref="VSP_035139 VSP_035140"/>
    </isoform>
    <isoform>
        <id>Q80TM9-6</id>
        <name>6</name>
        <sequence type="described" ref="VSP_035144 VSP_035145"/>
    </isoform>
    <isoform>
        <id>Q80TM9-7</id>
        <name>7</name>
        <sequence type="described" ref="VSP_035137 VSP_035138"/>
    </isoform>
</comment>
<comment type="tissue specificity">
    <text evidence="6">Highly expressed in brain and kidney. Moderately expressed in heart, liver, lung and skeletal muscle. Not detected in spleen and testis.</text>
</comment>
<comment type="developmental stage">
    <text evidence="6">Expressed in embryo at 7 day dpc onwards.</text>
</comment>
<comment type="domain">
    <text evidence="1">Both the presence of the PX domain and the coiled coil region are necessary for its endosomal targeting.</text>
</comment>
<comment type="miscellaneous">
    <text>'Nischarin' means 'slowness of motion' in classic Sanskrit.</text>
</comment>
<comment type="sequence caution" evidence="16">
    <conflict type="erroneous initiation">
        <sequence resource="EMBL-CDS" id="AAH03270"/>
    </conflict>
</comment>
<comment type="sequence caution" evidence="16">
    <conflict type="frameshift">
        <sequence resource="EMBL-CDS" id="AAI08365"/>
    </conflict>
</comment>
<comment type="sequence caution" evidence="16">
    <conflict type="erroneous initiation">
        <sequence resource="EMBL-CDS" id="AAK52087"/>
    </conflict>
</comment>
<comment type="sequence caution" evidence="16">
    <conflict type="erroneous initiation">
        <sequence resource="EMBL-CDS" id="BAC65694"/>
    </conflict>
</comment>
<name>NISCH_MOUSE</name>
<evidence type="ECO:0000250" key="1"/>
<evidence type="ECO:0000250" key="2">
    <source>
        <dbReference type="UniProtKB" id="Q9Y2I1"/>
    </source>
</evidence>
<evidence type="ECO:0000255" key="3"/>
<evidence type="ECO:0000255" key="4">
    <source>
        <dbReference type="PROSITE-ProRule" id="PRU00147"/>
    </source>
</evidence>
<evidence type="ECO:0000256" key="5">
    <source>
        <dbReference type="SAM" id="MobiDB-lite"/>
    </source>
</evidence>
<evidence type="ECO:0000269" key="6">
    <source>
    </source>
</evidence>
<evidence type="ECO:0000269" key="7">
    <source>
    </source>
</evidence>
<evidence type="ECO:0000269" key="8">
    <source>
    </source>
</evidence>
<evidence type="ECO:0000269" key="9">
    <source>
    </source>
</evidence>
<evidence type="ECO:0000269" key="10">
    <source>
    </source>
</evidence>
<evidence type="ECO:0000269" key="11">
    <source>
    </source>
</evidence>
<evidence type="ECO:0000303" key="12">
    <source>
    </source>
</evidence>
<evidence type="ECO:0000303" key="13">
    <source>
    </source>
</evidence>
<evidence type="ECO:0000303" key="14">
    <source>
    </source>
</evidence>
<evidence type="ECO:0000303" key="15">
    <source>
    </source>
</evidence>
<evidence type="ECO:0000305" key="16"/>
<evidence type="ECO:0007744" key="17">
    <source>
    </source>
</evidence>
<evidence type="ECO:0007744" key="18">
    <source>
    </source>
</evidence>
<keyword id="KW-0025">Alternative splicing</keyword>
<keyword id="KW-0053">Apoptosis</keyword>
<keyword id="KW-1003">Cell membrane</keyword>
<keyword id="KW-0175">Coiled coil</keyword>
<keyword id="KW-0963">Cytoplasm</keyword>
<keyword id="KW-0967">Endosome</keyword>
<keyword id="KW-0433">Leucine-rich repeat</keyword>
<keyword id="KW-0472">Membrane</keyword>
<keyword id="KW-0597">Phosphoprotein</keyword>
<keyword id="KW-0675">Receptor</keyword>
<keyword id="KW-1185">Reference proteome</keyword>
<keyword id="KW-0677">Repeat</keyword>
<sequence length="1593" mass="175012">MAAATLSFGPEREAEPAKEARVVGSELVDTYTVYVIQVTDGNHEWTIKHRYSDFHDLHEKLVAERKIDKSLLPPKKIIGKNSRSLVEKRERDLEVYLQTLLTTFPDVAPRVLAHFLHFHLYEVNGVTAALAEELFEKGEQLLGAGEVFAIRPLQLYAITEQLQQGKPTCASGDAKTDLGHILDFTCRLKYLKVSGTEGPFGTSNIKEQLLPFDLSIFKSLHQVEISHCDAKHIRGLVTSKPTLATMSVRFSATSMKEVLAPEASEFDEWEPEGTATLGGPVTAIIPTWQALTTLDLSHNSICEIDESVKLIPKIEYLDLSHNGLRVVDNLQHLYNLVHLDLSYNKLSSLEGVHTKLGNVKTLNLAGNFLESLSGLHKLYSLVNVDLRDNRIEQLDEVKSIGSLPCLERLTLLNNPLSIIPDYRTKVLSQFGERASEICLDDVATTEKELDTVEVLKAIQKAKDVKSKLSNTEKKAGEDFRLPPAPCIRPGGSPPAAPASASLPQPILSNQGIMFVQEEALASSLSSTDSLPPEDHRPIARACSDSLESIPAGQVASDDLRDVPGAVGGVSPDHAEPEVQVVPGSGQIIFLPFTCIGYTATNQDFIQRLSTLIRQAIERQLPAWIEAANQREEAHGEQGEEEEEEEEEEDVAENRYFEMGPPDAEEEEGSGQGEEDEEDEDEEAEEERLALEWALGADEDFLLEHIRILKVLWCFLIHVQGSIRQFAACLVLTDFGIAVFEIPHQESRGSSQHILSSLRFVFCFPHGDLTEFGFLMPELCLVLKVRHSENTLFIISDAANLHEFHADLRSCFAPQHMAMLCSPILYGSHTTLQEFLRQLLTFYKVAGGSQERSQGCFPVYLVYSDKRMVQTPAGDYSGNIEWASCTLCSAVRRSCCAPSEAVKSAAIPYWLLLTSQHLNVIKADFNPMPNRGTHNCRNRNSFKLSRVPLSTVLLDPTRSCTQPRGAFADGHVLELLVGYRFVTAIFVLPHEKFHFLRVYNQLRASLQDLKTVVISKNPSAKPRNQPAKSRASAEQRLQETPADAPAPAAVPPTASAPAPAEALAPDLAPVQAPGEDRGLTSAEAPAAAEAPAAAEAPAAAEAPAAAEAPAAAEAPAAAEAPAPAEAPAAAEAPAAAEAPAAAEAPAAAEAPASAEAPAPNQAPAPARGPAPARGPAPAGGPAPAEALAQAEVPAQYPSERLIQSTSEENQIPSHLPVCPSLQHIARLRGRAIIDLFHNSIAEVENEELRHLLWSSVVFYQTPGLEVTACVLLSSKAVYFILHDGLRRYFSEPLQDFWHQKNTDYNNSPFHVSQCFVLKLSDLQSVNVGLFDQYFRLTGSSPTQVVTCLTRDSYLTHCFLQHLMLVLSSLERTPSPEPVDKDFYSEFGDKNTGKMENYELIHSSRVKFTYPSEEEVGDLTYIVAQKMADPAKNPALSILLYIQAFQVVTPHLGRGRGPLRPKTLLLTSAEIFLLDEDYIHYPLPEFAKEPPQRDRYRLDDGRRVRDLDRVLMGYYPYPQALTLVFDDTQGHDLMGSVTLDHFGEMPGGPGRVGQGREVQWQVFVPSAESREKLISLLARQWEALCGRELPVELTG</sequence>
<proteinExistence type="evidence at protein level"/>